<protein>
    <recommendedName>
        <fullName>Dihydrofolate reductase</fullName>
        <ecNumber>1.5.1.3</ecNumber>
    </recommendedName>
</protein>
<proteinExistence type="inferred from homology"/>
<name>DYR_AEDAL</name>
<keyword id="KW-0521">NADP</keyword>
<keyword id="KW-0554">One-carbon metabolism</keyword>
<keyword id="KW-0560">Oxidoreductase</keyword>
<sequence>MKKFSLIVAVCANGGIGIKGDLPWRLRQELKYFSRMTKKIQDSGKRNAIIMGRKTYFGVPESKRPLPERLNIILTRDPSANAYPSEVMVCTSMQEALKKLDEAPLVNEIENVWIVGGNAVYKEAMQSDRCHRIYLTEIKETFECDAFFPEITSDFQLVKNDDDVPEDIQEENGIQYQYRIYEKVPK</sequence>
<reference key="1">
    <citation type="journal article" date="1991" name="Eur. J. Biochem.">
        <title>An amplified insect dihydrofolate reductase gene contains a single intron.</title>
        <authorList>
            <person name="Shotkoski F.A."/>
            <person name="Fallon A.M."/>
        </authorList>
    </citation>
    <scope>NUCLEOTIDE SEQUENCE [GENOMIC DNA]</scope>
</reference>
<comment type="function">
    <text evidence="1">Key enzyme in folate metabolism. Catalyzes an essential reaction for de novo glycine and purine synthesis, and for DNA precursor synthesis (By similarity).</text>
</comment>
<comment type="catalytic activity">
    <reaction evidence="2">
        <text>(6S)-5,6,7,8-tetrahydrofolate + NADP(+) = 7,8-dihydrofolate + NADPH + H(+)</text>
        <dbReference type="Rhea" id="RHEA:15009"/>
        <dbReference type="ChEBI" id="CHEBI:15378"/>
        <dbReference type="ChEBI" id="CHEBI:57451"/>
        <dbReference type="ChEBI" id="CHEBI:57453"/>
        <dbReference type="ChEBI" id="CHEBI:57783"/>
        <dbReference type="ChEBI" id="CHEBI:58349"/>
        <dbReference type="EC" id="1.5.1.3"/>
    </reaction>
</comment>
<comment type="pathway">
    <text>Cofactor biosynthesis; tetrahydrofolate biosynthesis; 5,6,7,8-tetrahydrofolate from 7,8-dihydrofolate: step 1/1.</text>
</comment>
<comment type="similarity">
    <text evidence="3">Belongs to the dihydrofolate reductase family.</text>
</comment>
<evidence type="ECO:0000250" key="1"/>
<evidence type="ECO:0000255" key="2">
    <source>
        <dbReference type="PROSITE-ProRule" id="PRU00660"/>
    </source>
</evidence>
<evidence type="ECO:0000305" key="3"/>
<feature type="chain" id="PRO_0000186369" description="Dihydrofolate reductase">
    <location>
        <begin position="1"/>
        <end position="186"/>
    </location>
</feature>
<feature type="domain" description="DHFR" evidence="2">
    <location>
        <begin position="3"/>
        <end position="183"/>
    </location>
</feature>
<feature type="binding site" evidence="1">
    <location>
        <position position="9"/>
    </location>
    <ligand>
        <name>NADP(+)</name>
        <dbReference type="ChEBI" id="CHEBI:58349"/>
    </ligand>
</feature>
<feature type="binding site" evidence="1">
    <location>
        <begin position="15"/>
        <end position="21"/>
    </location>
    <ligand>
        <name>NADP(+)</name>
        <dbReference type="ChEBI" id="CHEBI:58349"/>
    </ligand>
</feature>
<feature type="binding site" evidence="1">
    <location>
        <begin position="29"/>
        <end position="34"/>
    </location>
    <ligand>
        <name>substrate</name>
    </ligand>
</feature>
<feature type="binding site" evidence="1">
    <location>
        <begin position="53"/>
        <end position="55"/>
    </location>
    <ligand>
        <name>NADP(+)</name>
        <dbReference type="ChEBI" id="CHEBI:58349"/>
    </ligand>
</feature>
<feature type="binding site" evidence="1">
    <location>
        <position position="69"/>
    </location>
    <ligand>
        <name>substrate</name>
    </ligand>
</feature>
<feature type="binding site" evidence="1">
    <location>
        <begin position="75"/>
        <end position="77"/>
    </location>
    <ligand>
        <name>NADP(+)</name>
        <dbReference type="ChEBI" id="CHEBI:58349"/>
    </ligand>
</feature>
<feature type="binding site" evidence="1">
    <location>
        <begin position="116"/>
        <end position="123"/>
    </location>
    <ligand>
        <name>NADP(+)</name>
        <dbReference type="ChEBI" id="CHEBI:58349"/>
    </ligand>
</feature>
<organism>
    <name type="scientific">Aedes albopictus</name>
    <name type="common">Asian tiger mosquito</name>
    <name type="synonym">Stegomyia albopicta</name>
    <dbReference type="NCBI Taxonomy" id="7160"/>
    <lineage>
        <taxon>Eukaryota</taxon>
        <taxon>Metazoa</taxon>
        <taxon>Ecdysozoa</taxon>
        <taxon>Arthropoda</taxon>
        <taxon>Hexapoda</taxon>
        <taxon>Insecta</taxon>
        <taxon>Pterygota</taxon>
        <taxon>Neoptera</taxon>
        <taxon>Endopterygota</taxon>
        <taxon>Diptera</taxon>
        <taxon>Nematocera</taxon>
        <taxon>Culicoidea</taxon>
        <taxon>Culicidae</taxon>
        <taxon>Culicinae</taxon>
        <taxon>Aedini</taxon>
        <taxon>Aedes</taxon>
        <taxon>Stegomyia</taxon>
    </lineage>
</organism>
<dbReference type="EC" id="1.5.1.3"/>
<dbReference type="EMBL" id="X60192">
    <property type="protein sequence ID" value="CAA42748.1"/>
    <property type="molecule type" value="Genomic_DNA"/>
</dbReference>
<dbReference type="PIR" id="S17984">
    <property type="entry name" value="S17984"/>
</dbReference>
<dbReference type="RefSeq" id="XP_019543834.1">
    <property type="nucleotide sequence ID" value="XM_019688289.2"/>
</dbReference>
<dbReference type="RefSeq" id="XP_019932082.1">
    <property type="nucleotide sequence ID" value="XM_020076523.1"/>
</dbReference>
<dbReference type="RefSeq" id="XP_019932490.1">
    <property type="nucleotide sequence ID" value="XM_020076931.1"/>
</dbReference>
<dbReference type="SMR" id="P28019"/>
<dbReference type="EnsemblMetazoa" id="AALF028131-RA">
    <property type="protein sequence ID" value="AALF028131-PA"/>
    <property type="gene ID" value="AALF028131"/>
</dbReference>
<dbReference type="GeneID" id="109622266"/>
<dbReference type="KEGG" id="aalb:109414458"/>
<dbReference type="KEGG" id="aalb:109622266"/>
<dbReference type="VEuPathDB" id="VectorBase:AALC636_018370"/>
<dbReference type="VEuPathDB" id="VectorBase:AALC636_031623"/>
<dbReference type="VEuPathDB" id="VectorBase:AALF028131"/>
<dbReference type="VEuPathDB" id="VectorBase:AALFPA_045498"/>
<dbReference type="VEuPathDB" id="VectorBase:AALFPA_066294"/>
<dbReference type="VEuPathDB" id="VectorBase:AALFPA_074167"/>
<dbReference type="OMA" id="RDNQLPW"/>
<dbReference type="OrthoDB" id="4664297at2759"/>
<dbReference type="UniPathway" id="UPA00077">
    <property type="reaction ID" value="UER00158"/>
</dbReference>
<dbReference type="Proteomes" id="UP000069940">
    <property type="component" value="Unassembled WGS sequence"/>
</dbReference>
<dbReference type="GO" id="GO:0005739">
    <property type="term" value="C:mitochondrion"/>
    <property type="evidence" value="ECO:0007669"/>
    <property type="project" value="TreeGrafter"/>
</dbReference>
<dbReference type="GO" id="GO:0004146">
    <property type="term" value="F:dihydrofolate reductase activity"/>
    <property type="evidence" value="ECO:0007669"/>
    <property type="project" value="UniProtKB-EC"/>
</dbReference>
<dbReference type="GO" id="GO:0050661">
    <property type="term" value="F:NADP binding"/>
    <property type="evidence" value="ECO:0007669"/>
    <property type="project" value="InterPro"/>
</dbReference>
<dbReference type="GO" id="GO:0046452">
    <property type="term" value="P:dihydrofolate metabolic process"/>
    <property type="evidence" value="ECO:0007669"/>
    <property type="project" value="TreeGrafter"/>
</dbReference>
<dbReference type="GO" id="GO:0046655">
    <property type="term" value="P:folic acid metabolic process"/>
    <property type="evidence" value="ECO:0007669"/>
    <property type="project" value="TreeGrafter"/>
</dbReference>
<dbReference type="GO" id="GO:0006730">
    <property type="term" value="P:one-carbon metabolic process"/>
    <property type="evidence" value="ECO:0007669"/>
    <property type="project" value="UniProtKB-KW"/>
</dbReference>
<dbReference type="GO" id="GO:0046654">
    <property type="term" value="P:tetrahydrofolate biosynthetic process"/>
    <property type="evidence" value="ECO:0007669"/>
    <property type="project" value="UniProtKB-UniPathway"/>
</dbReference>
<dbReference type="CDD" id="cd00209">
    <property type="entry name" value="DHFR"/>
    <property type="match status" value="1"/>
</dbReference>
<dbReference type="FunFam" id="3.40.430.10:FF:000002">
    <property type="entry name" value="Dihydrofolate reductase"/>
    <property type="match status" value="1"/>
</dbReference>
<dbReference type="Gene3D" id="3.40.430.10">
    <property type="entry name" value="Dihydrofolate Reductase, subunit A"/>
    <property type="match status" value="1"/>
</dbReference>
<dbReference type="InterPro" id="IPR012259">
    <property type="entry name" value="DHFR"/>
</dbReference>
<dbReference type="InterPro" id="IPR024072">
    <property type="entry name" value="DHFR-like_dom_sf"/>
</dbReference>
<dbReference type="InterPro" id="IPR017925">
    <property type="entry name" value="DHFR_CS"/>
</dbReference>
<dbReference type="InterPro" id="IPR001796">
    <property type="entry name" value="DHFR_dom"/>
</dbReference>
<dbReference type="PANTHER" id="PTHR48069">
    <property type="entry name" value="DIHYDROFOLATE REDUCTASE"/>
    <property type="match status" value="1"/>
</dbReference>
<dbReference type="PANTHER" id="PTHR48069:SF3">
    <property type="entry name" value="DIHYDROFOLATE REDUCTASE"/>
    <property type="match status" value="1"/>
</dbReference>
<dbReference type="Pfam" id="PF00186">
    <property type="entry name" value="DHFR_1"/>
    <property type="match status" value="1"/>
</dbReference>
<dbReference type="PRINTS" id="PR00070">
    <property type="entry name" value="DHFR"/>
</dbReference>
<dbReference type="SUPFAM" id="SSF53597">
    <property type="entry name" value="Dihydrofolate reductase-like"/>
    <property type="match status" value="1"/>
</dbReference>
<dbReference type="PROSITE" id="PS00075">
    <property type="entry name" value="DHFR_1"/>
    <property type="match status" value="1"/>
</dbReference>
<dbReference type="PROSITE" id="PS51330">
    <property type="entry name" value="DHFR_2"/>
    <property type="match status" value="1"/>
</dbReference>
<accession>P28019</accession>
<gene>
    <name type="primary">DHFR</name>
</gene>